<proteinExistence type="inferred from homology"/>
<accession>Q8T1G5</accession>
<accession>Q554H1</accession>
<name>LYSC_DICDI</name>
<dbReference type="EC" id="3.2.1.17"/>
<dbReference type="EMBL" id="AAFI02000013">
    <property type="protein sequence ID" value="EAL69841.1"/>
    <property type="molecule type" value="Genomic_DNA"/>
</dbReference>
<dbReference type="RefSeq" id="XP_643740.1">
    <property type="nucleotide sequence ID" value="XM_638648.1"/>
</dbReference>
<dbReference type="FunCoup" id="Q8T1G5">
    <property type="interactions" value="437"/>
</dbReference>
<dbReference type="PaxDb" id="44689-DDB0231279"/>
<dbReference type="EnsemblProtists" id="EAL69841">
    <property type="protein sequence ID" value="EAL69841"/>
    <property type="gene ID" value="DDB_G0275121"/>
</dbReference>
<dbReference type="GeneID" id="8619784"/>
<dbReference type="KEGG" id="ddi:DDB_G0275121"/>
<dbReference type="dictyBase" id="DDB_G0275121">
    <property type="gene designation" value="alyC"/>
</dbReference>
<dbReference type="VEuPathDB" id="AmoebaDB:DDB_G0275121"/>
<dbReference type="eggNOG" id="ENOG502RCK0">
    <property type="taxonomic scope" value="Eukaryota"/>
</dbReference>
<dbReference type="HOGENOM" id="CLU_1491704_0_0_1"/>
<dbReference type="InParanoid" id="Q8T1G5"/>
<dbReference type="PhylomeDB" id="Q8T1G5"/>
<dbReference type="PRO" id="PR:Q8T1G5"/>
<dbReference type="Proteomes" id="UP000002195">
    <property type="component" value="Chromosome 2"/>
</dbReference>
<dbReference type="GO" id="GO:0031410">
    <property type="term" value="C:cytoplasmic vesicle"/>
    <property type="evidence" value="ECO:0000250"/>
    <property type="project" value="UniProtKB"/>
</dbReference>
<dbReference type="GO" id="GO:0060205">
    <property type="term" value="C:cytoplasmic vesicle lumen"/>
    <property type="evidence" value="ECO:0007669"/>
    <property type="project" value="UniProtKB-SubCell"/>
</dbReference>
<dbReference type="GO" id="GO:0031983">
    <property type="term" value="C:vesicle lumen"/>
    <property type="evidence" value="ECO:0000250"/>
    <property type="project" value="UniProtKB"/>
</dbReference>
<dbReference type="GO" id="GO:0003796">
    <property type="term" value="F:lysozyme activity"/>
    <property type="evidence" value="ECO:0000250"/>
    <property type="project" value="UniProtKB"/>
</dbReference>
<dbReference type="GO" id="GO:0050830">
    <property type="term" value="P:defense response to Gram-positive bacterium"/>
    <property type="evidence" value="ECO:0000250"/>
    <property type="project" value="UniProtKB"/>
</dbReference>
<dbReference type="GO" id="GO:0031640">
    <property type="term" value="P:killing of cells of another organism"/>
    <property type="evidence" value="ECO:0007669"/>
    <property type="project" value="UniProtKB-KW"/>
</dbReference>
<dbReference type="GO" id="GO:0009253">
    <property type="term" value="P:peptidoglycan catabolic process"/>
    <property type="evidence" value="ECO:0000305"/>
    <property type="project" value="dictyBase"/>
</dbReference>
<organism>
    <name type="scientific">Dictyostelium discoideum</name>
    <name type="common">Social amoeba</name>
    <dbReference type="NCBI Taxonomy" id="44689"/>
    <lineage>
        <taxon>Eukaryota</taxon>
        <taxon>Amoebozoa</taxon>
        <taxon>Evosea</taxon>
        <taxon>Eumycetozoa</taxon>
        <taxon>Dictyostelia</taxon>
        <taxon>Dictyosteliales</taxon>
        <taxon>Dictyosteliaceae</taxon>
        <taxon>Dictyostelium</taxon>
    </lineage>
</organism>
<evidence type="ECO:0000250" key="1"/>
<evidence type="ECO:0000305" key="2"/>
<feature type="signal peptide" evidence="1">
    <location>
        <begin position="1"/>
        <end position="19"/>
    </location>
</feature>
<feature type="chain" id="PRO_0000315918" description="Lysozyme C">
    <location>
        <begin position="20"/>
        <end position="138"/>
    </location>
</feature>
<feature type="propeptide" id="PRO_0000315919" evidence="1">
    <location>
        <begin position="139"/>
        <end position="181"/>
    </location>
</feature>
<gene>
    <name type="primary">alyC</name>
    <name type="ORF">DDB_G0275121</name>
</gene>
<comment type="function">
    <text evidence="1">Has antibacterial activity.</text>
</comment>
<comment type="catalytic activity">
    <reaction>
        <text>Hydrolysis of (1-&gt;4)-beta-linkages between N-acetylmuramic acid and N-acetyl-D-glucosamine residues in a peptidoglycan and between N-acetyl-D-glucosamine residues in chitodextrins.</text>
        <dbReference type="EC" id="3.2.1.17"/>
    </reaction>
</comment>
<comment type="subcellular location">
    <subcellularLocation>
        <location evidence="1">Cytoplasmic vesicle lumen</location>
    </subcellularLocation>
</comment>
<comment type="PTM">
    <text evidence="1">Contains six disulfide bonds.</text>
</comment>
<comment type="similarity">
    <text evidence="2">Belongs to the dictyostelium lysozyme family.</text>
</comment>
<reference key="1">
    <citation type="journal article" date="2002" name="Nature">
        <title>Sequence and analysis of chromosome 2 of Dictyostelium discoideum.</title>
        <authorList>
            <person name="Gloeckner G."/>
            <person name="Eichinger L."/>
            <person name="Szafranski K."/>
            <person name="Pachebat J.A."/>
            <person name="Bankier A.T."/>
            <person name="Dear P.H."/>
            <person name="Lehmann R."/>
            <person name="Baumgart C."/>
            <person name="Parra G."/>
            <person name="Abril J.F."/>
            <person name="Guigo R."/>
            <person name="Kumpf K."/>
            <person name="Tunggal B."/>
            <person name="Cox E.C."/>
            <person name="Quail M.A."/>
            <person name="Platzer M."/>
            <person name="Rosenthal A."/>
            <person name="Noegel A.A."/>
        </authorList>
    </citation>
    <scope>NUCLEOTIDE SEQUENCE [LARGE SCALE GENOMIC DNA]</scope>
    <source>
        <strain>AX4</strain>
    </source>
</reference>
<reference key="2">
    <citation type="journal article" date="2005" name="Nature">
        <title>The genome of the social amoeba Dictyostelium discoideum.</title>
        <authorList>
            <person name="Eichinger L."/>
            <person name="Pachebat J.A."/>
            <person name="Gloeckner G."/>
            <person name="Rajandream M.A."/>
            <person name="Sucgang R."/>
            <person name="Berriman M."/>
            <person name="Song J."/>
            <person name="Olsen R."/>
            <person name="Szafranski K."/>
            <person name="Xu Q."/>
            <person name="Tunggal B."/>
            <person name="Kummerfeld S."/>
            <person name="Madera M."/>
            <person name="Konfortov B.A."/>
            <person name="Rivero F."/>
            <person name="Bankier A.T."/>
            <person name="Lehmann R."/>
            <person name="Hamlin N."/>
            <person name="Davies R."/>
            <person name="Gaudet P."/>
            <person name="Fey P."/>
            <person name="Pilcher K."/>
            <person name="Chen G."/>
            <person name="Saunders D."/>
            <person name="Sodergren E.J."/>
            <person name="Davis P."/>
            <person name="Kerhornou A."/>
            <person name="Nie X."/>
            <person name="Hall N."/>
            <person name="Anjard C."/>
            <person name="Hemphill L."/>
            <person name="Bason N."/>
            <person name="Farbrother P."/>
            <person name="Desany B."/>
            <person name="Just E."/>
            <person name="Morio T."/>
            <person name="Rost R."/>
            <person name="Churcher C.M."/>
            <person name="Cooper J."/>
            <person name="Haydock S."/>
            <person name="van Driessche N."/>
            <person name="Cronin A."/>
            <person name="Goodhead I."/>
            <person name="Muzny D.M."/>
            <person name="Mourier T."/>
            <person name="Pain A."/>
            <person name="Lu M."/>
            <person name="Harper D."/>
            <person name="Lindsay R."/>
            <person name="Hauser H."/>
            <person name="James K.D."/>
            <person name="Quiles M."/>
            <person name="Madan Babu M."/>
            <person name="Saito T."/>
            <person name="Buchrieser C."/>
            <person name="Wardroper A."/>
            <person name="Felder M."/>
            <person name="Thangavelu M."/>
            <person name="Johnson D."/>
            <person name="Knights A."/>
            <person name="Loulseged H."/>
            <person name="Mungall K.L."/>
            <person name="Oliver K."/>
            <person name="Price C."/>
            <person name="Quail M.A."/>
            <person name="Urushihara H."/>
            <person name="Hernandez J."/>
            <person name="Rabbinowitsch E."/>
            <person name="Steffen D."/>
            <person name="Sanders M."/>
            <person name="Ma J."/>
            <person name="Kohara Y."/>
            <person name="Sharp S."/>
            <person name="Simmonds M.N."/>
            <person name="Spiegler S."/>
            <person name="Tivey A."/>
            <person name="Sugano S."/>
            <person name="White B."/>
            <person name="Walker D."/>
            <person name="Woodward J.R."/>
            <person name="Winckler T."/>
            <person name="Tanaka Y."/>
            <person name="Shaulsky G."/>
            <person name="Schleicher M."/>
            <person name="Weinstock G.M."/>
            <person name="Rosenthal A."/>
            <person name="Cox E.C."/>
            <person name="Chisholm R.L."/>
            <person name="Gibbs R.A."/>
            <person name="Loomis W.F."/>
            <person name="Platzer M."/>
            <person name="Kay R.R."/>
            <person name="Williams J.G."/>
            <person name="Dear P.H."/>
            <person name="Noegel A.A."/>
            <person name="Barrell B.G."/>
            <person name="Kuspa A."/>
        </authorList>
    </citation>
    <scope>NUCLEOTIDE SEQUENCE [LARGE SCALE GENOMIC DNA]</scope>
    <source>
        <strain>AX4</strain>
    </source>
</reference>
<keyword id="KW-0044">Antibiotic</keyword>
<keyword id="KW-0929">Antimicrobial</keyword>
<keyword id="KW-0081">Bacteriolytic enzyme</keyword>
<keyword id="KW-0968">Cytoplasmic vesicle</keyword>
<keyword id="KW-1015">Disulfide bond</keyword>
<keyword id="KW-0326">Glycosidase</keyword>
<keyword id="KW-0378">Hydrolase</keyword>
<keyword id="KW-1185">Reference proteome</keyword>
<keyword id="KW-0732">Signal</keyword>
<protein>
    <recommendedName>
        <fullName>Lysozyme C</fullName>
        <ecNumber>3.2.1.17</ecNumber>
    </recommendedName>
    <alternativeName>
        <fullName>1,4-beta-N-acetylmuramidase C</fullName>
    </alternativeName>
</protein>
<sequence>MRIAFFLLILSIIVGLAYGYSCPKPCYGNMCCSTSPDHKYYLTDFCGSTSACGPKPSCSGKLYFTADSQRFGCGKHLNLCRGKKCVKAKVYDAGPAEWVEKDAGKMIIDASPTICHELTGGSSCGWSDKFEITATVTSLTDSRPLGPFNVTEEEMDQLFIDHEIAMAQCEAEKTCNGFDLE</sequence>